<organism>
    <name type="scientific">Thermotoga maritima (strain ATCC 43589 / DSM 3109 / JCM 10099 / NBRC 100826 / MSB8)</name>
    <dbReference type="NCBI Taxonomy" id="243274"/>
    <lineage>
        <taxon>Bacteria</taxon>
        <taxon>Thermotogati</taxon>
        <taxon>Thermotogota</taxon>
        <taxon>Thermotogae</taxon>
        <taxon>Thermotogales</taxon>
        <taxon>Thermotogaceae</taxon>
        <taxon>Thermotoga</taxon>
    </lineage>
</organism>
<comment type="function">
    <text evidence="1">Promotes RNA polymerase assembly. Latches the N- and C-terminal regions of the beta' subunit thereby facilitating its interaction with the beta and alpha subunits (By similarity).</text>
</comment>
<comment type="catalytic activity">
    <reaction>
        <text>RNA(n) + a ribonucleoside 5'-triphosphate = RNA(n+1) + diphosphate</text>
        <dbReference type="Rhea" id="RHEA:21248"/>
        <dbReference type="Rhea" id="RHEA-COMP:14527"/>
        <dbReference type="Rhea" id="RHEA-COMP:17342"/>
        <dbReference type="ChEBI" id="CHEBI:33019"/>
        <dbReference type="ChEBI" id="CHEBI:61557"/>
        <dbReference type="ChEBI" id="CHEBI:140395"/>
        <dbReference type="EC" id="2.7.7.6"/>
    </reaction>
</comment>
<comment type="subunit">
    <text evidence="1">The RNAP catalytic core consists of 2 alpha, 1 beta, 1 beta' and 1 omega subunit. When a sigma factor is associated with the core the holoenzyme is formed, which can initiate transcription (By similarity).</text>
</comment>
<comment type="similarity">
    <text evidence="2">Belongs to the RNA polymerase subunit omega family.</text>
</comment>
<evidence type="ECO:0000250" key="1"/>
<evidence type="ECO:0000305" key="2"/>
<accession>Q9X214</accession>
<name>RPOZ_THEMA</name>
<protein>
    <recommendedName>
        <fullName>DNA-directed RNA polymerase subunit omega</fullName>
        <shortName>RNAP omega subunit</shortName>
        <ecNumber>2.7.7.6</ecNumber>
    </recommendedName>
    <alternativeName>
        <fullName>RNA polymerase omega subunit</fullName>
    </alternativeName>
    <alternativeName>
        <fullName>Transcriptase subunit omega</fullName>
    </alternativeName>
</protein>
<dbReference type="EC" id="2.7.7.6"/>
<dbReference type="EMBL" id="AE000512">
    <property type="protein sequence ID" value="AAD36755.1"/>
    <property type="molecule type" value="Genomic_DNA"/>
</dbReference>
<dbReference type="PIR" id="B72223">
    <property type="entry name" value="B72223"/>
</dbReference>
<dbReference type="RefSeq" id="NP_229488.1">
    <property type="nucleotide sequence ID" value="NC_000853.1"/>
</dbReference>
<dbReference type="RefSeq" id="WP_004082204.1">
    <property type="nucleotide sequence ID" value="NZ_CP011107.1"/>
</dbReference>
<dbReference type="SMR" id="Q9X214"/>
<dbReference type="STRING" id="243274.TM_1688"/>
<dbReference type="PaxDb" id="243274-THEMA_05800"/>
<dbReference type="EnsemblBacteria" id="AAD36755">
    <property type="protein sequence ID" value="AAD36755"/>
    <property type="gene ID" value="TM_1688"/>
</dbReference>
<dbReference type="KEGG" id="tma:TM1688"/>
<dbReference type="KEGG" id="tmi:THEMA_05800"/>
<dbReference type="KEGG" id="tmm:Tmari_1696"/>
<dbReference type="KEGG" id="tmw:THMA_1730"/>
<dbReference type="eggNOG" id="COG1758">
    <property type="taxonomic scope" value="Bacteria"/>
</dbReference>
<dbReference type="InParanoid" id="Q9X214"/>
<dbReference type="OrthoDB" id="48414at2"/>
<dbReference type="Proteomes" id="UP000008183">
    <property type="component" value="Chromosome"/>
</dbReference>
<dbReference type="GO" id="GO:0000428">
    <property type="term" value="C:DNA-directed RNA polymerase complex"/>
    <property type="evidence" value="ECO:0007669"/>
    <property type="project" value="UniProtKB-KW"/>
</dbReference>
<dbReference type="GO" id="GO:0003677">
    <property type="term" value="F:DNA binding"/>
    <property type="evidence" value="ECO:0007669"/>
    <property type="project" value="UniProtKB-UniRule"/>
</dbReference>
<dbReference type="GO" id="GO:0003899">
    <property type="term" value="F:DNA-directed RNA polymerase activity"/>
    <property type="evidence" value="ECO:0007669"/>
    <property type="project" value="UniProtKB-UniRule"/>
</dbReference>
<dbReference type="GO" id="GO:0006351">
    <property type="term" value="P:DNA-templated transcription"/>
    <property type="evidence" value="ECO:0007669"/>
    <property type="project" value="UniProtKB-UniRule"/>
</dbReference>
<dbReference type="Gene3D" id="3.90.940.10">
    <property type="match status" value="1"/>
</dbReference>
<dbReference type="HAMAP" id="MF_00366">
    <property type="entry name" value="RNApol_bact_RpoZ"/>
    <property type="match status" value="1"/>
</dbReference>
<dbReference type="InterPro" id="IPR003716">
    <property type="entry name" value="DNA-dir_RNA_pol_omega"/>
</dbReference>
<dbReference type="InterPro" id="IPR006110">
    <property type="entry name" value="Pol_omega/Rpo6/RPB6"/>
</dbReference>
<dbReference type="InterPro" id="IPR036161">
    <property type="entry name" value="RPB6/omega-like_sf"/>
</dbReference>
<dbReference type="Pfam" id="PF01192">
    <property type="entry name" value="RNA_pol_Rpb6"/>
    <property type="match status" value="1"/>
</dbReference>
<dbReference type="SMART" id="SM01409">
    <property type="entry name" value="RNA_pol_Rpb6"/>
    <property type="match status" value="1"/>
</dbReference>
<dbReference type="SUPFAM" id="SSF63562">
    <property type="entry name" value="RPB6/omega subunit-like"/>
    <property type="match status" value="1"/>
</dbReference>
<reference key="1">
    <citation type="journal article" date="1999" name="Nature">
        <title>Evidence for lateral gene transfer between Archaea and Bacteria from genome sequence of Thermotoga maritima.</title>
        <authorList>
            <person name="Nelson K.E."/>
            <person name="Clayton R.A."/>
            <person name="Gill S.R."/>
            <person name="Gwinn M.L."/>
            <person name="Dodson R.J."/>
            <person name="Haft D.H."/>
            <person name="Hickey E.K."/>
            <person name="Peterson J.D."/>
            <person name="Nelson W.C."/>
            <person name="Ketchum K.A."/>
            <person name="McDonald L.A."/>
            <person name="Utterback T.R."/>
            <person name="Malek J.A."/>
            <person name="Linher K.D."/>
            <person name="Garrett M.M."/>
            <person name="Stewart A.M."/>
            <person name="Cotton M.D."/>
            <person name="Pratt M.S."/>
            <person name="Phillips C.A."/>
            <person name="Richardson D.L."/>
            <person name="Heidelberg J.F."/>
            <person name="Sutton G.G."/>
            <person name="Fleischmann R.D."/>
            <person name="Eisen J.A."/>
            <person name="White O."/>
            <person name="Salzberg S.L."/>
            <person name="Smith H.O."/>
            <person name="Venter J.C."/>
            <person name="Fraser C.M."/>
        </authorList>
    </citation>
    <scope>NUCLEOTIDE SEQUENCE [LARGE SCALE GENOMIC DNA]</scope>
    <source>
        <strain>ATCC 43589 / DSM 3109 / JCM 10099 / NBRC 100826 / MSB8</strain>
    </source>
</reference>
<proteinExistence type="inferred from homology"/>
<sequence>MEKIVKFDLKYDELLKKIPYKYAIPVVVAKRAEAIREYARPFVITDDENYVSIAFMELSLNYIRIKNEEILKALIPKVK</sequence>
<feature type="chain" id="PRO_0000129003" description="DNA-directed RNA polymerase subunit omega">
    <location>
        <begin position="1"/>
        <end position="79"/>
    </location>
</feature>
<keyword id="KW-0240">DNA-directed RNA polymerase</keyword>
<keyword id="KW-0548">Nucleotidyltransferase</keyword>
<keyword id="KW-1185">Reference proteome</keyword>
<keyword id="KW-0804">Transcription</keyword>
<keyword id="KW-0808">Transferase</keyword>
<gene>
    <name type="primary">rpoZ</name>
    <name type="ordered locus">TM_1688</name>
</gene>